<dbReference type="EC" id="2.4.2.29" evidence="1"/>
<dbReference type="EMBL" id="AE009949">
    <property type="protein sequence ID" value="AAL96988.1"/>
    <property type="molecule type" value="Genomic_DNA"/>
</dbReference>
<dbReference type="RefSeq" id="WP_002986319.1">
    <property type="nucleotide sequence ID" value="NC_003485.1"/>
</dbReference>
<dbReference type="SMR" id="P66910"/>
<dbReference type="GeneID" id="69900150"/>
<dbReference type="KEGG" id="spm:spyM18_0189"/>
<dbReference type="HOGENOM" id="CLU_022060_0_1_9"/>
<dbReference type="UniPathway" id="UPA00392"/>
<dbReference type="GO" id="GO:0005829">
    <property type="term" value="C:cytosol"/>
    <property type="evidence" value="ECO:0007669"/>
    <property type="project" value="TreeGrafter"/>
</dbReference>
<dbReference type="GO" id="GO:0046872">
    <property type="term" value="F:metal ion binding"/>
    <property type="evidence" value="ECO:0007669"/>
    <property type="project" value="UniProtKB-KW"/>
</dbReference>
<dbReference type="GO" id="GO:0008479">
    <property type="term" value="F:tRNA-guanosine(34) queuine transglycosylase activity"/>
    <property type="evidence" value="ECO:0007669"/>
    <property type="project" value="UniProtKB-UniRule"/>
</dbReference>
<dbReference type="GO" id="GO:0008616">
    <property type="term" value="P:queuosine biosynthetic process"/>
    <property type="evidence" value="ECO:0007669"/>
    <property type="project" value="UniProtKB-UniRule"/>
</dbReference>
<dbReference type="GO" id="GO:0002099">
    <property type="term" value="P:tRNA wobble guanine modification"/>
    <property type="evidence" value="ECO:0007669"/>
    <property type="project" value="TreeGrafter"/>
</dbReference>
<dbReference type="GO" id="GO:0101030">
    <property type="term" value="P:tRNA-guanine transglycosylation"/>
    <property type="evidence" value="ECO:0007669"/>
    <property type="project" value="InterPro"/>
</dbReference>
<dbReference type="FunFam" id="3.20.20.105:FF:000001">
    <property type="entry name" value="Queuine tRNA-ribosyltransferase"/>
    <property type="match status" value="1"/>
</dbReference>
<dbReference type="Gene3D" id="3.20.20.105">
    <property type="entry name" value="Queuine tRNA-ribosyltransferase-like"/>
    <property type="match status" value="1"/>
</dbReference>
<dbReference type="HAMAP" id="MF_00168">
    <property type="entry name" value="Q_tRNA_Tgt"/>
    <property type="match status" value="1"/>
</dbReference>
<dbReference type="InterPro" id="IPR050076">
    <property type="entry name" value="ArchSynthase1/Queuine_TRR"/>
</dbReference>
<dbReference type="InterPro" id="IPR004803">
    <property type="entry name" value="TGT"/>
</dbReference>
<dbReference type="InterPro" id="IPR036511">
    <property type="entry name" value="TGT-like_sf"/>
</dbReference>
<dbReference type="InterPro" id="IPR002616">
    <property type="entry name" value="tRNA_ribo_trans-like"/>
</dbReference>
<dbReference type="NCBIfam" id="TIGR00430">
    <property type="entry name" value="Q_tRNA_tgt"/>
    <property type="match status" value="1"/>
</dbReference>
<dbReference type="NCBIfam" id="TIGR00449">
    <property type="entry name" value="tgt_general"/>
    <property type="match status" value="1"/>
</dbReference>
<dbReference type="PANTHER" id="PTHR46499">
    <property type="entry name" value="QUEUINE TRNA-RIBOSYLTRANSFERASE"/>
    <property type="match status" value="1"/>
</dbReference>
<dbReference type="PANTHER" id="PTHR46499:SF1">
    <property type="entry name" value="QUEUINE TRNA-RIBOSYLTRANSFERASE"/>
    <property type="match status" value="1"/>
</dbReference>
<dbReference type="Pfam" id="PF01702">
    <property type="entry name" value="TGT"/>
    <property type="match status" value="1"/>
</dbReference>
<dbReference type="SUPFAM" id="SSF51713">
    <property type="entry name" value="tRNA-guanine transglycosylase"/>
    <property type="match status" value="1"/>
</dbReference>
<keyword id="KW-0328">Glycosyltransferase</keyword>
<keyword id="KW-0479">Metal-binding</keyword>
<keyword id="KW-0671">Queuosine biosynthesis</keyword>
<keyword id="KW-0808">Transferase</keyword>
<keyword id="KW-0819">tRNA processing</keyword>
<keyword id="KW-0862">Zinc</keyword>
<sequence>MTDYPIKYRLIKTEKHTGARLGEIITPHGTFPTPMFMPVGTQATVKTQSPEELKAIGSGIILSNTYHLWLRPGDELIARSGGLHKFMNWDQPILTDSGGFQVYSLADSRNITEEGVTFKNHLNGSKMFLSPEKAISIQNNLGSDIMMSFDECPQFYQPYDYVKKSIERTSRWAERGLKAHRRPHDQGLFGIVQGAGFEDLRRQSAADLVAMDFPGYSIGGLAVGESHEEMNAVLDFTTPLLPENKPRYLMGVGAPDSLIDGVIRGVDMFDCVLPTRIARNGTCMTSEGRLVIKNAKFAEDFTPLDHDCDCYTCQNYSRAYIRHLLKADETFGIRLTSYHNLYFLVNLMKKVRQAIMDDNLLEFRQDFLERYGYNKSNRNF</sequence>
<protein>
    <recommendedName>
        <fullName evidence="1">Queuine tRNA-ribosyltransferase</fullName>
        <ecNumber evidence="1">2.4.2.29</ecNumber>
    </recommendedName>
    <alternativeName>
        <fullName evidence="1">Guanine insertion enzyme</fullName>
    </alternativeName>
    <alternativeName>
        <fullName evidence="1">tRNA-guanine transglycosylase</fullName>
    </alternativeName>
</protein>
<comment type="function">
    <text evidence="1">Catalyzes the base-exchange of a guanine (G) residue with the queuine precursor 7-aminomethyl-7-deazaguanine (PreQ1) at position 34 (anticodon wobble position) in tRNAs with GU(N) anticodons (tRNA-Asp, -Asn, -His and -Tyr). Catalysis occurs through a double-displacement mechanism. The nucleophile active site attacks the C1' of nucleotide 34 to detach the guanine base from the RNA, forming a covalent enzyme-RNA intermediate. The proton acceptor active site deprotonates the incoming PreQ1, allowing a nucleophilic attack on the C1' of the ribose to form the product. After dissociation, two additional enzymatic reactions on the tRNA convert PreQ1 to queuine (Q), resulting in the hypermodified nucleoside queuosine (7-(((4,5-cis-dihydroxy-2-cyclopenten-1-yl)amino)methyl)-7-deazaguanosine).</text>
</comment>
<comment type="catalytic activity">
    <reaction evidence="1">
        <text>7-aminomethyl-7-carbaguanine + guanosine(34) in tRNA = 7-aminomethyl-7-carbaguanosine(34) in tRNA + guanine</text>
        <dbReference type="Rhea" id="RHEA:24104"/>
        <dbReference type="Rhea" id="RHEA-COMP:10341"/>
        <dbReference type="Rhea" id="RHEA-COMP:10342"/>
        <dbReference type="ChEBI" id="CHEBI:16235"/>
        <dbReference type="ChEBI" id="CHEBI:58703"/>
        <dbReference type="ChEBI" id="CHEBI:74269"/>
        <dbReference type="ChEBI" id="CHEBI:82833"/>
        <dbReference type="EC" id="2.4.2.29"/>
    </reaction>
</comment>
<comment type="cofactor">
    <cofactor evidence="1">
        <name>Zn(2+)</name>
        <dbReference type="ChEBI" id="CHEBI:29105"/>
    </cofactor>
    <text evidence="1">Binds 1 zinc ion per subunit.</text>
</comment>
<comment type="pathway">
    <text evidence="1">tRNA modification; tRNA-queuosine biosynthesis.</text>
</comment>
<comment type="subunit">
    <text evidence="1">Homodimer. Within each dimer, one monomer is responsible for RNA recognition and catalysis, while the other monomer binds to the replacement base PreQ1.</text>
</comment>
<comment type="similarity">
    <text evidence="1">Belongs to the queuine tRNA-ribosyltransferase family.</text>
</comment>
<feature type="chain" id="PRO_0000135538" description="Queuine tRNA-ribosyltransferase">
    <location>
        <begin position="1"/>
        <end position="380"/>
    </location>
</feature>
<feature type="region of interest" description="RNA binding" evidence="1">
    <location>
        <begin position="251"/>
        <end position="257"/>
    </location>
</feature>
<feature type="region of interest" description="RNA binding; important for wobble base 34 recognition" evidence="1">
    <location>
        <begin position="275"/>
        <end position="279"/>
    </location>
</feature>
<feature type="active site" description="Proton acceptor" evidence="1">
    <location>
        <position position="96"/>
    </location>
</feature>
<feature type="active site" description="Nucleophile" evidence="1">
    <location>
        <position position="270"/>
    </location>
</feature>
<feature type="binding site" evidence="1">
    <location>
        <begin position="96"/>
        <end position="100"/>
    </location>
    <ligand>
        <name>substrate</name>
    </ligand>
</feature>
<feature type="binding site" evidence="1">
    <location>
        <position position="150"/>
    </location>
    <ligand>
        <name>substrate</name>
    </ligand>
</feature>
<feature type="binding site" evidence="1">
    <location>
        <position position="193"/>
    </location>
    <ligand>
        <name>substrate</name>
    </ligand>
</feature>
<feature type="binding site" evidence="1">
    <location>
        <position position="220"/>
    </location>
    <ligand>
        <name>substrate</name>
    </ligand>
</feature>
<feature type="binding site" evidence="1">
    <location>
        <position position="308"/>
    </location>
    <ligand>
        <name>Zn(2+)</name>
        <dbReference type="ChEBI" id="CHEBI:29105"/>
    </ligand>
</feature>
<feature type="binding site" evidence="1">
    <location>
        <position position="310"/>
    </location>
    <ligand>
        <name>Zn(2+)</name>
        <dbReference type="ChEBI" id="CHEBI:29105"/>
    </ligand>
</feature>
<feature type="binding site" evidence="1">
    <location>
        <position position="313"/>
    </location>
    <ligand>
        <name>Zn(2+)</name>
        <dbReference type="ChEBI" id="CHEBI:29105"/>
    </ligand>
</feature>
<feature type="binding site" evidence="1">
    <location>
        <position position="339"/>
    </location>
    <ligand>
        <name>Zn(2+)</name>
        <dbReference type="ChEBI" id="CHEBI:29105"/>
    </ligand>
</feature>
<name>TGT_STRP8</name>
<gene>
    <name evidence="1" type="primary">tgt</name>
    <name type="ordered locus">spyM18_0189</name>
</gene>
<evidence type="ECO:0000255" key="1">
    <source>
        <dbReference type="HAMAP-Rule" id="MF_00168"/>
    </source>
</evidence>
<proteinExistence type="inferred from homology"/>
<accession>P66910</accession>
<accession>Q8P2S1</accession>
<reference key="1">
    <citation type="journal article" date="2002" name="Proc. Natl. Acad. Sci. U.S.A.">
        <title>Genome sequence and comparative microarray analysis of serotype M18 group A Streptococcus strains associated with acute rheumatic fever outbreaks.</title>
        <authorList>
            <person name="Smoot J.C."/>
            <person name="Barbian K.D."/>
            <person name="Van Gompel J.J."/>
            <person name="Smoot L.M."/>
            <person name="Chaussee M.S."/>
            <person name="Sylva G.L."/>
            <person name="Sturdevant D.E."/>
            <person name="Ricklefs S.M."/>
            <person name="Porcella S.F."/>
            <person name="Parkins L.D."/>
            <person name="Beres S.B."/>
            <person name="Campbell D.S."/>
            <person name="Smith T.M."/>
            <person name="Zhang Q."/>
            <person name="Kapur V."/>
            <person name="Daly J.A."/>
            <person name="Veasy L.G."/>
            <person name="Musser J.M."/>
        </authorList>
    </citation>
    <scope>NUCLEOTIDE SEQUENCE [LARGE SCALE GENOMIC DNA]</scope>
    <source>
        <strain>MGAS8232</strain>
    </source>
</reference>
<organism>
    <name type="scientific">Streptococcus pyogenes serotype M18 (strain MGAS8232)</name>
    <dbReference type="NCBI Taxonomy" id="186103"/>
    <lineage>
        <taxon>Bacteria</taxon>
        <taxon>Bacillati</taxon>
        <taxon>Bacillota</taxon>
        <taxon>Bacilli</taxon>
        <taxon>Lactobacillales</taxon>
        <taxon>Streptococcaceae</taxon>
        <taxon>Streptococcus</taxon>
    </lineage>
</organism>